<reference key="1">
    <citation type="journal article" date="2005" name="Gene">
        <title>The first complete chloroplast genome sequence of a lycophyte, Huperzia lucidula (Lycopodiaceae).</title>
        <authorList>
            <person name="Wolf P.G."/>
            <person name="Karol K.G."/>
            <person name="Mandoli D.F."/>
            <person name="Kuehl J.V."/>
            <person name="Arumuganathan K."/>
            <person name="Ellis M.W."/>
            <person name="Mishler B.D."/>
            <person name="Kelch D.G."/>
            <person name="Olmstead R.G."/>
            <person name="Boore J.L."/>
        </authorList>
    </citation>
    <scope>NUCLEOTIDE SEQUENCE [LARGE SCALE GENOMIC DNA]</scope>
</reference>
<evidence type="ECO:0000255" key="1">
    <source>
        <dbReference type="HAMAP-Rule" id="MF_00444"/>
    </source>
</evidence>
<organism>
    <name type="scientific">Huperzia lucidula</name>
    <name type="common">Shining clubmoss</name>
    <name type="synonym">Lycopodium lucidulum</name>
    <dbReference type="NCBI Taxonomy" id="37429"/>
    <lineage>
        <taxon>Eukaryota</taxon>
        <taxon>Viridiplantae</taxon>
        <taxon>Streptophyta</taxon>
        <taxon>Embryophyta</taxon>
        <taxon>Tracheophyta</taxon>
        <taxon>Lycopodiopsida</taxon>
        <taxon>Lycopodiales</taxon>
        <taxon>Lycopodiaceae</taxon>
        <taxon>Huperzioideae</taxon>
        <taxon>Huperzia</taxon>
    </lineage>
</organism>
<accession>Q5SD28</accession>
<dbReference type="EC" id="3.4.21.92" evidence="1"/>
<dbReference type="EMBL" id="AY660566">
    <property type="protein sequence ID" value="AAT80700.1"/>
    <property type="molecule type" value="Genomic_DNA"/>
</dbReference>
<dbReference type="RefSeq" id="YP_209504.1">
    <property type="nucleotide sequence ID" value="NC_006861.1"/>
</dbReference>
<dbReference type="SMR" id="Q5SD28"/>
<dbReference type="MEROPS" id="S14.002"/>
<dbReference type="GeneID" id="3283831"/>
<dbReference type="GO" id="GO:0009570">
    <property type="term" value="C:chloroplast stroma"/>
    <property type="evidence" value="ECO:0007669"/>
    <property type="project" value="UniProtKB-SubCell"/>
</dbReference>
<dbReference type="GO" id="GO:0009368">
    <property type="term" value="C:endopeptidase Clp complex"/>
    <property type="evidence" value="ECO:0007669"/>
    <property type="project" value="TreeGrafter"/>
</dbReference>
<dbReference type="GO" id="GO:0004176">
    <property type="term" value="F:ATP-dependent peptidase activity"/>
    <property type="evidence" value="ECO:0007669"/>
    <property type="project" value="InterPro"/>
</dbReference>
<dbReference type="GO" id="GO:0051117">
    <property type="term" value="F:ATPase binding"/>
    <property type="evidence" value="ECO:0007669"/>
    <property type="project" value="TreeGrafter"/>
</dbReference>
<dbReference type="GO" id="GO:0004252">
    <property type="term" value="F:serine-type endopeptidase activity"/>
    <property type="evidence" value="ECO:0007669"/>
    <property type="project" value="UniProtKB-UniRule"/>
</dbReference>
<dbReference type="GO" id="GO:0006515">
    <property type="term" value="P:protein quality control for misfolded or incompletely synthesized proteins"/>
    <property type="evidence" value="ECO:0007669"/>
    <property type="project" value="TreeGrafter"/>
</dbReference>
<dbReference type="CDD" id="cd07017">
    <property type="entry name" value="S14_ClpP_2"/>
    <property type="match status" value="1"/>
</dbReference>
<dbReference type="FunFam" id="3.90.226.10:FF:000006">
    <property type="entry name" value="ATP-dependent Clp protease proteolytic subunit"/>
    <property type="match status" value="1"/>
</dbReference>
<dbReference type="Gene3D" id="3.90.226.10">
    <property type="entry name" value="2-enoyl-CoA Hydratase, Chain A, domain 1"/>
    <property type="match status" value="1"/>
</dbReference>
<dbReference type="HAMAP" id="MF_00444">
    <property type="entry name" value="ClpP"/>
    <property type="match status" value="1"/>
</dbReference>
<dbReference type="InterPro" id="IPR001907">
    <property type="entry name" value="ClpP"/>
</dbReference>
<dbReference type="InterPro" id="IPR029045">
    <property type="entry name" value="ClpP/crotonase-like_dom_sf"/>
</dbReference>
<dbReference type="InterPro" id="IPR023562">
    <property type="entry name" value="ClpP/TepA"/>
</dbReference>
<dbReference type="InterPro" id="IPR033135">
    <property type="entry name" value="ClpP_His_AS"/>
</dbReference>
<dbReference type="InterPro" id="IPR018215">
    <property type="entry name" value="ClpP_Ser_AS"/>
</dbReference>
<dbReference type="PANTHER" id="PTHR10381">
    <property type="entry name" value="ATP-DEPENDENT CLP PROTEASE PROTEOLYTIC SUBUNIT"/>
    <property type="match status" value="1"/>
</dbReference>
<dbReference type="PANTHER" id="PTHR10381:SF15">
    <property type="entry name" value="CHLOROPLASTIC ATP-DEPENDENT CLP PROTEASE PROTEOLYTIC SUBUNIT 1"/>
    <property type="match status" value="1"/>
</dbReference>
<dbReference type="Pfam" id="PF00574">
    <property type="entry name" value="CLP_protease"/>
    <property type="match status" value="1"/>
</dbReference>
<dbReference type="PRINTS" id="PR00127">
    <property type="entry name" value="CLPPROTEASEP"/>
</dbReference>
<dbReference type="SUPFAM" id="SSF52096">
    <property type="entry name" value="ClpP/crotonase"/>
    <property type="match status" value="1"/>
</dbReference>
<dbReference type="PROSITE" id="PS00382">
    <property type="entry name" value="CLP_PROTEASE_HIS"/>
    <property type="match status" value="1"/>
</dbReference>
<dbReference type="PROSITE" id="PS00381">
    <property type="entry name" value="CLP_PROTEASE_SER"/>
    <property type="match status" value="1"/>
</dbReference>
<sequence>MPIGVPKVPFRLPGDEDAVWIDVYNRLFRERLLFLGQQVDDELANQLICIMIYPNGEDDSRDMYLYVNSPGGAVFAGISIYDAMQFVVPDVQTICIGLAASMGSFVLAGGEITKRIALPHARVMIHQPASSYYEGQVGECIMEAEEVLKIRDCITKVYAQRTGKPLWVVSEDTERDVFTSAEEAKVYGVIDPVAVETSSNSPISKLTKS</sequence>
<name>CLPP_HUPLU</name>
<protein>
    <recommendedName>
        <fullName evidence="1">ATP-dependent Clp protease proteolytic subunit</fullName>
        <ecNumber evidence="1">3.4.21.92</ecNumber>
    </recommendedName>
    <alternativeName>
        <fullName evidence="1">Endopeptidase Clp</fullName>
    </alternativeName>
</protein>
<proteinExistence type="inferred from homology"/>
<gene>
    <name evidence="1" type="primary">clpP</name>
</gene>
<keyword id="KW-0150">Chloroplast</keyword>
<keyword id="KW-0378">Hydrolase</keyword>
<keyword id="KW-0934">Plastid</keyword>
<keyword id="KW-0645">Protease</keyword>
<keyword id="KW-0720">Serine protease</keyword>
<comment type="function">
    <text evidence="1">Cleaves peptides in various proteins in a process that requires ATP hydrolysis. Has a chymotrypsin-like activity. Plays a major role in the degradation of misfolded proteins.</text>
</comment>
<comment type="catalytic activity">
    <reaction evidence="1">
        <text>Hydrolysis of proteins to small peptides in the presence of ATP and magnesium. alpha-casein is the usual test substrate. In the absence of ATP, only oligopeptides shorter than five residues are hydrolyzed (such as succinyl-Leu-Tyr-|-NHMec, and Leu-Tyr-Leu-|-Tyr-Trp, in which cleavage of the -Tyr-|-Leu- and -Tyr-|-Trp bonds also occurs).</text>
        <dbReference type="EC" id="3.4.21.92"/>
    </reaction>
</comment>
<comment type="subunit">
    <text>Component of the chloroplastic Clp protease core complex.</text>
</comment>
<comment type="subcellular location">
    <subcellularLocation>
        <location evidence="1">Plastid</location>
        <location evidence="1">Chloroplast stroma</location>
    </subcellularLocation>
</comment>
<comment type="similarity">
    <text evidence="1">Belongs to the peptidase S14 family.</text>
</comment>
<geneLocation type="chloroplast"/>
<feature type="chain" id="PRO_0000179741" description="ATP-dependent Clp protease proteolytic subunit">
    <location>
        <begin position="1"/>
        <end position="209"/>
    </location>
</feature>
<feature type="active site" description="Nucleophile" evidence="1">
    <location>
        <position position="101"/>
    </location>
</feature>
<feature type="active site" evidence="1">
    <location>
        <position position="126"/>
    </location>
</feature>